<gene>
    <name evidence="1" type="primary">ilvC</name>
    <name type="ordered locus">MS0045</name>
</gene>
<proteinExistence type="inferred from homology"/>
<comment type="function">
    <text evidence="1">Involved in the biosynthesis of branched-chain amino acids (BCAA). Catalyzes an alkyl-migration followed by a ketol-acid reduction of (S)-2-acetolactate (S2AL) to yield (R)-2,3-dihydroxy-isovalerate. In the isomerase reaction, S2AL is rearranged via a Mg-dependent methyl migration to produce 3-hydroxy-3-methyl-2-ketobutyrate (HMKB). In the reductase reaction, this 2-ketoacid undergoes a metal-dependent reduction by NADPH to yield (R)-2,3-dihydroxy-isovalerate.</text>
</comment>
<comment type="catalytic activity">
    <reaction evidence="1">
        <text>(2R)-2,3-dihydroxy-3-methylbutanoate + NADP(+) = (2S)-2-acetolactate + NADPH + H(+)</text>
        <dbReference type="Rhea" id="RHEA:22068"/>
        <dbReference type="ChEBI" id="CHEBI:15378"/>
        <dbReference type="ChEBI" id="CHEBI:49072"/>
        <dbReference type="ChEBI" id="CHEBI:57783"/>
        <dbReference type="ChEBI" id="CHEBI:58349"/>
        <dbReference type="ChEBI" id="CHEBI:58476"/>
        <dbReference type="EC" id="1.1.1.86"/>
    </reaction>
</comment>
<comment type="catalytic activity">
    <reaction evidence="1">
        <text>(2R,3R)-2,3-dihydroxy-3-methylpentanoate + NADP(+) = (S)-2-ethyl-2-hydroxy-3-oxobutanoate + NADPH + H(+)</text>
        <dbReference type="Rhea" id="RHEA:13493"/>
        <dbReference type="ChEBI" id="CHEBI:15378"/>
        <dbReference type="ChEBI" id="CHEBI:49256"/>
        <dbReference type="ChEBI" id="CHEBI:49258"/>
        <dbReference type="ChEBI" id="CHEBI:57783"/>
        <dbReference type="ChEBI" id="CHEBI:58349"/>
        <dbReference type="EC" id="1.1.1.86"/>
    </reaction>
</comment>
<comment type="cofactor">
    <cofactor evidence="1">
        <name>Mg(2+)</name>
        <dbReference type="ChEBI" id="CHEBI:18420"/>
    </cofactor>
    <text evidence="1">Binds 2 magnesium ions per subunit.</text>
</comment>
<comment type="pathway">
    <text evidence="1">Amino-acid biosynthesis; L-isoleucine biosynthesis; L-isoleucine from 2-oxobutanoate: step 2/4.</text>
</comment>
<comment type="pathway">
    <text evidence="1">Amino-acid biosynthesis; L-valine biosynthesis; L-valine from pyruvate: step 2/4.</text>
</comment>
<comment type="similarity">
    <text evidence="1">Belongs to the ketol-acid reductoisomerase family.</text>
</comment>
<dbReference type="EC" id="1.1.1.86" evidence="1"/>
<dbReference type="EMBL" id="AE016827">
    <property type="protein sequence ID" value="AAU36652.1"/>
    <property type="molecule type" value="Genomic_DNA"/>
</dbReference>
<dbReference type="RefSeq" id="WP_011199229.1">
    <property type="nucleotide sequence ID" value="NC_006300.1"/>
</dbReference>
<dbReference type="SMR" id="Q65WK8"/>
<dbReference type="STRING" id="221988.MS0045"/>
<dbReference type="KEGG" id="msu:MS0045"/>
<dbReference type="eggNOG" id="COG0059">
    <property type="taxonomic scope" value="Bacteria"/>
</dbReference>
<dbReference type="HOGENOM" id="CLU_551905_0_0_6"/>
<dbReference type="OrthoDB" id="9804088at2"/>
<dbReference type="UniPathway" id="UPA00047">
    <property type="reaction ID" value="UER00056"/>
</dbReference>
<dbReference type="UniPathway" id="UPA00049">
    <property type="reaction ID" value="UER00060"/>
</dbReference>
<dbReference type="Proteomes" id="UP000000607">
    <property type="component" value="Chromosome"/>
</dbReference>
<dbReference type="GO" id="GO:0005829">
    <property type="term" value="C:cytosol"/>
    <property type="evidence" value="ECO:0007669"/>
    <property type="project" value="TreeGrafter"/>
</dbReference>
<dbReference type="GO" id="GO:0004455">
    <property type="term" value="F:ketol-acid reductoisomerase activity"/>
    <property type="evidence" value="ECO:0007669"/>
    <property type="project" value="UniProtKB-UniRule"/>
</dbReference>
<dbReference type="GO" id="GO:0000287">
    <property type="term" value="F:magnesium ion binding"/>
    <property type="evidence" value="ECO:0007669"/>
    <property type="project" value="UniProtKB-UniRule"/>
</dbReference>
<dbReference type="GO" id="GO:0009097">
    <property type="term" value="P:isoleucine biosynthetic process"/>
    <property type="evidence" value="ECO:0007669"/>
    <property type="project" value="UniProtKB-UniRule"/>
</dbReference>
<dbReference type="GO" id="GO:0009099">
    <property type="term" value="P:L-valine biosynthetic process"/>
    <property type="evidence" value="ECO:0007669"/>
    <property type="project" value="UniProtKB-UniRule"/>
</dbReference>
<dbReference type="FunFam" id="1.10.1040.10:FF:000007">
    <property type="entry name" value="Ketol-acid reductoisomerase (NADP(+))"/>
    <property type="match status" value="1"/>
</dbReference>
<dbReference type="FunFam" id="3.40.50.720:FF:000043">
    <property type="entry name" value="Ketol-acid reductoisomerase (NADP(+))"/>
    <property type="match status" value="1"/>
</dbReference>
<dbReference type="Gene3D" id="1.10.1040.10">
    <property type="entry name" value="N-(1-d-carboxylethyl)-l-norvaline Dehydrogenase, domain 2"/>
    <property type="match status" value="1"/>
</dbReference>
<dbReference type="Gene3D" id="3.40.50.720">
    <property type="entry name" value="NAD(P)-binding Rossmann-like Domain"/>
    <property type="match status" value="1"/>
</dbReference>
<dbReference type="HAMAP" id="MF_00435">
    <property type="entry name" value="IlvC"/>
    <property type="match status" value="1"/>
</dbReference>
<dbReference type="InterPro" id="IPR008927">
    <property type="entry name" value="6-PGluconate_DH-like_C_sf"/>
</dbReference>
<dbReference type="InterPro" id="IPR013328">
    <property type="entry name" value="6PGD_dom2"/>
</dbReference>
<dbReference type="InterPro" id="IPR013023">
    <property type="entry name" value="KARI"/>
</dbReference>
<dbReference type="InterPro" id="IPR000506">
    <property type="entry name" value="KARI_C"/>
</dbReference>
<dbReference type="InterPro" id="IPR013116">
    <property type="entry name" value="KARI_N"/>
</dbReference>
<dbReference type="InterPro" id="IPR036291">
    <property type="entry name" value="NAD(P)-bd_dom_sf"/>
</dbReference>
<dbReference type="NCBIfam" id="TIGR00465">
    <property type="entry name" value="ilvC"/>
    <property type="match status" value="1"/>
</dbReference>
<dbReference type="NCBIfam" id="NF003557">
    <property type="entry name" value="PRK05225.1"/>
    <property type="match status" value="1"/>
</dbReference>
<dbReference type="PANTHER" id="PTHR21371">
    <property type="entry name" value="KETOL-ACID REDUCTOISOMERASE, MITOCHONDRIAL"/>
    <property type="match status" value="1"/>
</dbReference>
<dbReference type="PANTHER" id="PTHR21371:SF1">
    <property type="entry name" value="KETOL-ACID REDUCTOISOMERASE, MITOCHONDRIAL"/>
    <property type="match status" value="1"/>
</dbReference>
<dbReference type="Pfam" id="PF01450">
    <property type="entry name" value="KARI_C"/>
    <property type="match status" value="2"/>
</dbReference>
<dbReference type="Pfam" id="PF07991">
    <property type="entry name" value="KARI_N"/>
    <property type="match status" value="1"/>
</dbReference>
<dbReference type="SUPFAM" id="SSF48179">
    <property type="entry name" value="6-phosphogluconate dehydrogenase C-terminal domain-like"/>
    <property type="match status" value="2"/>
</dbReference>
<dbReference type="SUPFAM" id="SSF51735">
    <property type="entry name" value="NAD(P)-binding Rossmann-fold domains"/>
    <property type="match status" value="1"/>
</dbReference>
<dbReference type="PROSITE" id="PS51851">
    <property type="entry name" value="KARI_C"/>
    <property type="match status" value="2"/>
</dbReference>
<dbReference type="PROSITE" id="PS51850">
    <property type="entry name" value="KARI_N"/>
    <property type="match status" value="1"/>
</dbReference>
<name>ILVC_MANSM</name>
<protein>
    <recommendedName>
        <fullName evidence="1">Ketol-acid reductoisomerase (NADP(+))</fullName>
        <shortName evidence="1">KARI</shortName>
        <ecNumber evidence="1">1.1.1.86</ecNumber>
    </recommendedName>
    <alternativeName>
        <fullName evidence="1">Acetohydroxy-acid isomeroreductase</fullName>
        <shortName evidence="1">AHIR</shortName>
    </alternativeName>
    <alternativeName>
        <fullName evidence="1">Alpha-keto-beta-hydroxylacyl reductoisomerase</fullName>
    </alternativeName>
    <alternativeName>
        <fullName evidence="1">Ketol-acid reductoisomerase type 2</fullName>
    </alternativeName>
    <alternativeName>
        <fullName evidence="1">Ketol-acid reductoisomerase type II</fullName>
    </alternativeName>
</protein>
<reference key="1">
    <citation type="journal article" date="2004" name="Nat. Biotechnol.">
        <title>The genome sequence of the capnophilic rumen bacterium Mannheimia succiniciproducens.</title>
        <authorList>
            <person name="Hong S.H."/>
            <person name="Kim J.S."/>
            <person name="Lee S.Y."/>
            <person name="In Y.H."/>
            <person name="Choi S.S."/>
            <person name="Rih J.-K."/>
            <person name="Kim C.H."/>
            <person name="Jeong H."/>
            <person name="Hur C.G."/>
            <person name="Kim J.J."/>
        </authorList>
    </citation>
    <scope>NUCLEOTIDE SEQUENCE [LARGE SCALE GENOMIC DNA]</scope>
    <source>
        <strain>KCTC 0769BP / MBEL55E</strain>
    </source>
</reference>
<sequence>MSNYFNTLNLRQKLDQLGRCRFMERSEFADGCNFLKGKKIVIVGCGAQGLNQGLNMRDSGLDISYALRPEAITEKRASFQRATENGFKVGTYQELIPTADLVVNLTPDKQHSKVVADVMPLMKQGASFGYSHGFNIVEVGEQIREDITVVMVAPKCPGTEVREEYKRGFGVPTLIAVHPANDPKGEGMAIAKAWASATGGDRAGVLESSFVAEVKSDLMGEQTILCGMLQAGSIVCYDKLVADGKDPAYAGKLIQYGWETITEALKQGGITLMMDRLSNSAKIRAFELAEEIKEHLNFLYLKHMDDIISGEFSATMMADWANGDKDLFAWREATGKTAFENAPKADGIKISEQEYFDNGVVMVAMVKAGVEMAFDAMVASGIYEESAYYESLHELPLIANTIARKRLYEMNVVISDTAEYGNYLFSNVATPILAKEIVSQLKRGDLGEPTPAAEIDNVYLRDINDTIRNHPVELIGQELRGYMTDMKRISSQG</sequence>
<organism>
    <name type="scientific">Mannheimia succiniciproducens (strain KCTC 0769BP / MBEL55E)</name>
    <dbReference type="NCBI Taxonomy" id="221988"/>
    <lineage>
        <taxon>Bacteria</taxon>
        <taxon>Pseudomonadati</taxon>
        <taxon>Pseudomonadota</taxon>
        <taxon>Gammaproteobacteria</taxon>
        <taxon>Pasteurellales</taxon>
        <taxon>Pasteurellaceae</taxon>
        <taxon>Basfia</taxon>
    </lineage>
</organism>
<feature type="chain" id="PRO_0000226181" description="Ketol-acid reductoisomerase (NADP(+))">
    <location>
        <begin position="1"/>
        <end position="493"/>
    </location>
</feature>
<feature type="domain" description="KARI N-terminal Rossmann" evidence="2">
    <location>
        <begin position="14"/>
        <end position="208"/>
    </location>
</feature>
<feature type="domain" description="KARI C-terminal knotted 1" evidence="3">
    <location>
        <begin position="209"/>
        <end position="345"/>
    </location>
</feature>
<feature type="domain" description="KARI C-terminal knotted 2" evidence="3">
    <location>
        <begin position="346"/>
        <end position="486"/>
    </location>
</feature>
<feature type="active site" evidence="1">
    <location>
        <position position="132"/>
    </location>
</feature>
<feature type="binding site" evidence="1">
    <location>
        <begin position="45"/>
        <end position="48"/>
    </location>
    <ligand>
        <name>NADP(+)</name>
        <dbReference type="ChEBI" id="CHEBI:58349"/>
    </ligand>
</feature>
<feature type="binding site" evidence="1">
    <location>
        <position position="68"/>
    </location>
    <ligand>
        <name>NADP(+)</name>
        <dbReference type="ChEBI" id="CHEBI:58349"/>
    </ligand>
</feature>
<feature type="binding site" evidence="1">
    <location>
        <position position="76"/>
    </location>
    <ligand>
        <name>NADP(+)</name>
        <dbReference type="ChEBI" id="CHEBI:58349"/>
    </ligand>
</feature>
<feature type="binding site" evidence="1">
    <location>
        <position position="78"/>
    </location>
    <ligand>
        <name>NADP(+)</name>
        <dbReference type="ChEBI" id="CHEBI:58349"/>
    </ligand>
</feature>
<feature type="binding site" evidence="1">
    <location>
        <begin position="108"/>
        <end position="110"/>
    </location>
    <ligand>
        <name>NADP(+)</name>
        <dbReference type="ChEBI" id="CHEBI:58349"/>
    </ligand>
</feature>
<feature type="binding site" evidence="1">
    <location>
        <position position="158"/>
    </location>
    <ligand>
        <name>NADP(+)</name>
        <dbReference type="ChEBI" id="CHEBI:58349"/>
    </ligand>
</feature>
<feature type="binding site" evidence="1">
    <location>
        <position position="217"/>
    </location>
    <ligand>
        <name>Mg(2+)</name>
        <dbReference type="ChEBI" id="CHEBI:18420"/>
        <label>1</label>
    </ligand>
</feature>
<feature type="binding site" evidence="1">
    <location>
        <position position="217"/>
    </location>
    <ligand>
        <name>Mg(2+)</name>
        <dbReference type="ChEBI" id="CHEBI:18420"/>
        <label>2</label>
    </ligand>
</feature>
<feature type="binding site" evidence="1">
    <location>
        <position position="221"/>
    </location>
    <ligand>
        <name>Mg(2+)</name>
        <dbReference type="ChEBI" id="CHEBI:18420"/>
        <label>1</label>
    </ligand>
</feature>
<feature type="binding site" evidence="1">
    <location>
        <position position="390"/>
    </location>
    <ligand>
        <name>Mg(2+)</name>
        <dbReference type="ChEBI" id="CHEBI:18420"/>
        <label>2</label>
    </ligand>
</feature>
<feature type="binding site" evidence="1">
    <location>
        <position position="394"/>
    </location>
    <ligand>
        <name>Mg(2+)</name>
        <dbReference type="ChEBI" id="CHEBI:18420"/>
        <label>2</label>
    </ligand>
</feature>
<feature type="binding site" evidence="1">
    <location>
        <position position="415"/>
    </location>
    <ligand>
        <name>substrate</name>
    </ligand>
</feature>
<keyword id="KW-0028">Amino-acid biosynthesis</keyword>
<keyword id="KW-0100">Branched-chain amino acid biosynthesis</keyword>
<keyword id="KW-0460">Magnesium</keyword>
<keyword id="KW-0479">Metal-binding</keyword>
<keyword id="KW-0521">NADP</keyword>
<keyword id="KW-0560">Oxidoreductase</keyword>
<keyword id="KW-0677">Repeat</keyword>
<evidence type="ECO:0000255" key="1">
    <source>
        <dbReference type="HAMAP-Rule" id="MF_00435"/>
    </source>
</evidence>
<evidence type="ECO:0000255" key="2">
    <source>
        <dbReference type="PROSITE-ProRule" id="PRU01197"/>
    </source>
</evidence>
<evidence type="ECO:0000255" key="3">
    <source>
        <dbReference type="PROSITE-ProRule" id="PRU01198"/>
    </source>
</evidence>
<accession>Q65WK8</accession>